<protein>
    <recommendedName>
        <fullName evidence="3">3-oxo-isoapionate-4-phosphate transcarboxylase/hydrolase</fullName>
        <ecNumber evidence="2">3.7.1.28</ecNumber>
    </recommendedName>
</protein>
<organism>
    <name type="scientific">Xanthobacter autotrophicus (strain ATCC BAA-1158 / Py2)</name>
    <dbReference type="NCBI Taxonomy" id="78245"/>
    <lineage>
        <taxon>Bacteria</taxon>
        <taxon>Pseudomonadati</taxon>
        <taxon>Pseudomonadota</taxon>
        <taxon>Alphaproteobacteria</taxon>
        <taxon>Hyphomicrobiales</taxon>
        <taxon>Xanthobacteraceae</taxon>
        <taxon>Xanthobacter</taxon>
    </lineage>
</organism>
<reference key="1">
    <citation type="submission" date="2007-07" db="EMBL/GenBank/DDBJ databases">
        <title>Complete sequence of chromosome of Xanthobacter autotrophicus Py2.</title>
        <authorList>
            <consortium name="US DOE Joint Genome Institute"/>
            <person name="Copeland A."/>
            <person name="Lucas S."/>
            <person name="Lapidus A."/>
            <person name="Barry K."/>
            <person name="Glavina del Rio T."/>
            <person name="Hammon N."/>
            <person name="Israni S."/>
            <person name="Dalin E."/>
            <person name="Tice H."/>
            <person name="Pitluck S."/>
            <person name="Sims D."/>
            <person name="Brettin T."/>
            <person name="Bruce D."/>
            <person name="Detter J.C."/>
            <person name="Han C."/>
            <person name="Tapia R."/>
            <person name="Brainard J."/>
            <person name="Schmutz J."/>
            <person name="Larimer F."/>
            <person name="Land M."/>
            <person name="Hauser L."/>
            <person name="Kyrpides N."/>
            <person name="Kim E."/>
            <person name="Ensigns S.A."/>
            <person name="Richardson P."/>
        </authorList>
    </citation>
    <scope>NUCLEOTIDE SEQUENCE [LARGE SCALE GENOMIC DNA]</scope>
    <source>
        <strain>ATCC BAA-1158 / Py2</strain>
    </source>
</reference>
<reference key="2">
    <citation type="journal article" date="2018" name="Nat. Chem. Biol.">
        <title>Functional assignment of multiple catabolic pathways for D-apiose.</title>
        <authorList>
            <person name="Carter M.S."/>
            <person name="Zhang X."/>
            <person name="Huang H."/>
            <person name="Bouvier J.T."/>
            <person name="Francisco B.S."/>
            <person name="Vetting M.W."/>
            <person name="Al-Obaidi N."/>
            <person name="Bonanno J.B."/>
            <person name="Ghosh A."/>
            <person name="Zallot R.G."/>
            <person name="Andersen H.M."/>
            <person name="Almo S.C."/>
            <person name="Gerlt J.A."/>
        </authorList>
    </citation>
    <scope>FUNCTION</scope>
    <scope>CATALYTIC ACTIVITY</scope>
    <scope>PATHWAY</scope>
</reference>
<gene>
    <name evidence="3" type="primary">oiaT</name>
    <name evidence="5" type="ordered locus">Xaut_2924</name>
</gene>
<feature type="chain" id="PRO_0000446042" description="3-oxo-isoapionate-4-phosphate transcarboxylase/hydrolase">
    <location>
        <begin position="1"/>
        <end position="414"/>
    </location>
</feature>
<feature type="binding site" description="via carbamate group" evidence="1">
    <location>
        <position position="180"/>
    </location>
    <ligand>
        <name>Mg(2+)</name>
        <dbReference type="ChEBI" id="CHEBI:18420"/>
    </ligand>
</feature>
<feature type="binding site" evidence="1">
    <location>
        <position position="182"/>
    </location>
    <ligand>
        <name>Mg(2+)</name>
        <dbReference type="ChEBI" id="CHEBI:18420"/>
    </ligand>
</feature>
<feature type="binding site" evidence="1">
    <location>
        <position position="183"/>
    </location>
    <ligand>
        <name>Mg(2+)</name>
        <dbReference type="ChEBI" id="CHEBI:18420"/>
    </ligand>
</feature>
<feature type="modified residue" description="N6-carboxylysine" evidence="1">
    <location>
        <position position="180"/>
    </location>
</feature>
<proteinExistence type="evidence at protein level"/>
<evidence type="ECO:0000250" key="1">
    <source>
        <dbReference type="UniProtKB" id="O93627"/>
    </source>
</evidence>
<evidence type="ECO:0000269" key="2">
    <source>
    </source>
</evidence>
<evidence type="ECO:0000303" key="3">
    <source>
    </source>
</evidence>
<evidence type="ECO:0000305" key="4"/>
<evidence type="ECO:0000312" key="5">
    <source>
        <dbReference type="EMBL" id="ABS68160.1"/>
    </source>
</evidence>
<accession>A7IJG7</accession>
<comment type="function">
    <text evidence="2">Involved in catabolism of D-apiose. Catalyzes the conversion of 3-oxo-isoapionate 4-phosphate to 3-phosphoglycerate and glycolate.</text>
</comment>
<comment type="catalytic activity">
    <reaction evidence="2">
        <text>3-oxoisoapionate 4-phosphate + H2O = (2R)-3-phosphoglycerate + glycolate + H(+)</text>
        <dbReference type="Rhea" id="RHEA:57076"/>
        <dbReference type="ChEBI" id="CHEBI:15377"/>
        <dbReference type="ChEBI" id="CHEBI:15378"/>
        <dbReference type="ChEBI" id="CHEBI:29805"/>
        <dbReference type="ChEBI" id="CHEBI:58272"/>
        <dbReference type="ChEBI" id="CHEBI:141357"/>
        <dbReference type="EC" id="3.7.1.28"/>
    </reaction>
</comment>
<comment type="cofactor">
    <cofactor evidence="1">
        <name>Mg(2+)</name>
        <dbReference type="ChEBI" id="CHEBI:18420"/>
    </cofactor>
</comment>
<comment type="pathway">
    <text evidence="2">Carbohydrate metabolism.</text>
</comment>
<comment type="similarity">
    <text evidence="4">Belongs to the RuBisCO large chain family.</text>
</comment>
<sequence>MSERVYATYWMETGGDPARTAEVIAGEQSSGTFVALATETAELKERSGARVERLDILDTADIPSLPGGMASDRYTRAILELSWPVENFGPSLPNLMSTIAGNLFELHQVSGLRLIDLKLPPSFTNAFAGPAFGIAGTRKLAGVAQGPIIGTIIKPSIGLTPEETAQQVRELIAGDIDFIKDDELQADGARCPFEARVKAVMRVVNDAADRRGRKVMVAFNITGDLDEMRRRHDLVLAEGGTCVMVCLNSIGLVGVREIRRHTQLPIHGHRAGWGYLYRCPSLGWDYAPWQQLWRLAGVDHLHVNGLDNKFSEANASVIAAARAVLSPLNHAAPMGAMPVFSSGQTGRQAAETYAAIGCADLIHTAGGGIFGHPAGVPAGVEALRAAWRAAMAGASLEDEATRSPALRSALGFWR</sequence>
<dbReference type="EC" id="3.7.1.28" evidence="2"/>
<dbReference type="EMBL" id="CP000781">
    <property type="protein sequence ID" value="ABS68160.1"/>
    <property type="molecule type" value="Genomic_DNA"/>
</dbReference>
<dbReference type="SMR" id="A7IJG7"/>
<dbReference type="STRING" id="78245.Xaut_2924"/>
<dbReference type="KEGG" id="xau:Xaut_2924"/>
<dbReference type="eggNOG" id="COG1850">
    <property type="taxonomic scope" value="Bacteria"/>
</dbReference>
<dbReference type="HOGENOM" id="CLU_031450_3_0_5"/>
<dbReference type="OrthoDB" id="9764279at2"/>
<dbReference type="PhylomeDB" id="A7IJG7"/>
<dbReference type="BioCyc" id="MetaCyc:MONOMER-20969"/>
<dbReference type="BRENDA" id="3.7.1.28">
    <property type="organism ID" value="1641"/>
</dbReference>
<dbReference type="Proteomes" id="UP000002417">
    <property type="component" value="Chromosome"/>
</dbReference>
<dbReference type="GO" id="GO:0016787">
    <property type="term" value="F:hydrolase activity"/>
    <property type="evidence" value="ECO:0007669"/>
    <property type="project" value="UniProtKB-KW"/>
</dbReference>
<dbReference type="GO" id="GO:0000287">
    <property type="term" value="F:magnesium ion binding"/>
    <property type="evidence" value="ECO:0007669"/>
    <property type="project" value="InterPro"/>
</dbReference>
<dbReference type="GO" id="GO:0016984">
    <property type="term" value="F:ribulose-bisphosphate carboxylase activity"/>
    <property type="evidence" value="ECO:0007669"/>
    <property type="project" value="InterPro"/>
</dbReference>
<dbReference type="GO" id="GO:0015977">
    <property type="term" value="P:carbon fixation"/>
    <property type="evidence" value="ECO:0007669"/>
    <property type="project" value="InterPro"/>
</dbReference>
<dbReference type="CDD" id="cd08207">
    <property type="entry name" value="RLP_NonPhot"/>
    <property type="match status" value="1"/>
</dbReference>
<dbReference type="Gene3D" id="3.20.20.110">
    <property type="entry name" value="Ribulose bisphosphate carboxylase, large subunit, C-terminal domain"/>
    <property type="match status" value="1"/>
</dbReference>
<dbReference type="Gene3D" id="3.30.70.150">
    <property type="entry name" value="RuBisCO large subunit, N-terminal domain"/>
    <property type="match status" value="1"/>
</dbReference>
<dbReference type="InterPro" id="IPR033966">
    <property type="entry name" value="RuBisCO"/>
</dbReference>
<dbReference type="InterPro" id="IPR000685">
    <property type="entry name" value="RuBisCO_lsu_C"/>
</dbReference>
<dbReference type="InterPro" id="IPR036376">
    <property type="entry name" value="RuBisCO_lsu_C_sf"/>
</dbReference>
<dbReference type="InterPro" id="IPR017443">
    <property type="entry name" value="RuBisCO_lsu_fd_N"/>
</dbReference>
<dbReference type="InterPro" id="IPR036422">
    <property type="entry name" value="RuBisCO_lsu_N_sf"/>
</dbReference>
<dbReference type="PANTHER" id="PTHR42704">
    <property type="entry name" value="RIBULOSE BISPHOSPHATE CARBOXYLASE"/>
    <property type="match status" value="1"/>
</dbReference>
<dbReference type="PANTHER" id="PTHR42704:SF17">
    <property type="entry name" value="RIBULOSE BISPHOSPHATE CARBOXYLASE LARGE CHAIN"/>
    <property type="match status" value="1"/>
</dbReference>
<dbReference type="Pfam" id="PF00016">
    <property type="entry name" value="RuBisCO_large"/>
    <property type="match status" value="1"/>
</dbReference>
<dbReference type="Pfam" id="PF02788">
    <property type="entry name" value="RuBisCO_large_N"/>
    <property type="match status" value="1"/>
</dbReference>
<dbReference type="SFLD" id="SFLDS00014">
    <property type="entry name" value="RuBisCO"/>
    <property type="match status" value="1"/>
</dbReference>
<dbReference type="SFLD" id="SFLDG00301">
    <property type="entry name" value="RuBisCO-like_proteins"/>
    <property type="match status" value="1"/>
</dbReference>
<dbReference type="SUPFAM" id="SSF51649">
    <property type="entry name" value="RuBisCo, C-terminal domain"/>
    <property type="match status" value="1"/>
</dbReference>
<dbReference type="SUPFAM" id="SSF54966">
    <property type="entry name" value="RuBisCO, large subunit, small (N-terminal) domain"/>
    <property type="match status" value="1"/>
</dbReference>
<keyword id="KW-0119">Carbohydrate metabolism</keyword>
<keyword id="KW-0378">Hydrolase</keyword>
<keyword id="KW-0460">Magnesium</keyword>
<keyword id="KW-0479">Metal-binding</keyword>
<keyword id="KW-1185">Reference proteome</keyword>
<name>OIAT_XANP2</name>